<feature type="chain" id="PRO_0000256985" description="Chaperonin GroEL">
    <location>
        <begin position="1"/>
        <end position="548"/>
    </location>
</feature>
<feature type="binding site" evidence="1">
    <location>
        <begin position="30"/>
        <end position="33"/>
    </location>
    <ligand>
        <name>ATP</name>
        <dbReference type="ChEBI" id="CHEBI:30616"/>
    </ligand>
</feature>
<feature type="binding site" evidence="1">
    <location>
        <position position="51"/>
    </location>
    <ligand>
        <name>ATP</name>
        <dbReference type="ChEBI" id="CHEBI:30616"/>
    </ligand>
</feature>
<feature type="binding site" evidence="1">
    <location>
        <begin position="87"/>
        <end position="91"/>
    </location>
    <ligand>
        <name>ATP</name>
        <dbReference type="ChEBI" id="CHEBI:30616"/>
    </ligand>
</feature>
<feature type="binding site" evidence="1">
    <location>
        <position position="415"/>
    </location>
    <ligand>
        <name>ATP</name>
        <dbReference type="ChEBI" id="CHEBI:30616"/>
    </ligand>
</feature>
<feature type="binding site" evidence="1">
    <location>
        <begin position="479"/>
        <end position="481"/>
    </location>
    <ligand>
        <name>ATP</name>
        <dbReference type="ChEBI" id="CHEBI:30616"/>
    </ligand>
</feature>
<feature type="binding site" evidence="1">
    <location>
        <position position="495"/>
    </location>
    <ligand>
        <name>ATP</name>
        <dbReference type="ChEBI" id="CHEBI:30616"/>
    </ligand>
</feature>
<name>CH60_SHIBS</name>
<accession>Q31T78</accession>
<sequence length="548" mass="57329">MAAKDVKFGNDARVKMLRGVNVLADAVKVTLGPKGRNVVLDKSFGAPTITKDGVSVAREIELEDKFENMGAQMVKEVASKANDAAGDGTTTATVLAQAIITEGLKAVAAGMNPMDLKRGIDKAVTAAVEELKALSVPCSDSKAIAQVGTISANSDETVGKLIAEAMDKVGKEGVITVEDGTGLQDELDVVEGMQFDRGYLSPYFINKPETGAVELESPFILLADKKISNIREMLPVLEAVAKAGKPLLIIAEDVEGEALATLVVNTMRGIVKVAAVKAPGFGDRRKAMLQDIATLTGGTVISEEIGMELEKATLEDLGQAKRVVINKDTTTIIDGVGEEAAIQGRVAQIRQQIEEATSDYDREKLQERVAKLAGGVAVIKVGAATEVEMKEKKARVEDALHATRAAVEEGVVAGGGVALIRVASKLADLRGQNEDQNVGIKVALRAMEAPLRQIVLNCGEEPSVVANTVKGGDGNYGYNAATEEYGNMIDMGILDPTKVTRSALQYAASVAGLMITTECMVTDLPKNDAADLGAAGGMGGMGGMGGMM</sequence>
<gene>
    <name evidence="1" type="primary">groEL</name>
    <name evidence="1" type="synonym">groL</name>
    <name type="ordered locus">SBO_4313</name>
</gene>
<comment type="function">
    <text evidence="1">Together with its co-chaperonin GroES, plays an essential role in assisting protein folding. The GroEL-GroES system forms a nano-cage that allows encapsulation of the non-native substrate proteins and provides a physical environment optimized to promote and accelerate protein folding.</text>
</comment>
<comment type="catalytic activity">
    <reaction evidence="1">
        <text>ATP + H2O + a folded polypeptide = ADP + phosphate + an unfolded polypeptide.</text>
        <dbReference type="EC" id="5.6.1.7"/>
    </reaction>
</comment>
<comment type="subunit">
    <text evidence="1">Forms a cylinder of 14 subunits composed of two heptameric rings stacked back-to-back. Interacts with the co-chaperonin GroES.</text>
</comment>
<comment type="subcellular location">
    <subcellularLocation>
        <location evidence="1">Cytoplasm</location>
    </subcellularLocation>
</comment>
<comment type="similarity">
    <text evidence="1">Belongs to the chaperonin (HSP60) family.</text>
</comment>
<keyword id="KW-0067">ATP-binding</keyword>
<keyword id="KW-0143">Chaperone</keyword>
<keyword id="KW-0963">Cytoplasm</keyword>
<keyword id="KW-0413">Isomerase</keyword>
<keyword id="KW-0547">Nucleotide-binding</keyword>
<protein>
    <recommendedName>
        <fullName evidence="1">Chaperonin GroEL</fullName>
        <ecNumber evidence="1">5.6.1.7</ecNumber>
    </recommendedName>
    <alternativeName>
        <fullName evidence="1">60 kDa chaperonin</fullName>
    </alternativeName>
    <alternativeName>
        <fullName evidence="1">Chaperonin-60</fullName>
        <shortName evidence="1">Cpn60</shortName>
    </alternativeName>
</protein>
<evidence type="ECO:0000255" key="1">
    <source>
        <dbReference type="HAMAP-Rule" id="MF_00600"/>
    </source>
</evidence>
<proteinExistence type="inferred from homology"/>
<reference key="1">
    <citation type="journal article" date="2005" name="Nucleic Acids Res.">
        <title>Genome dynamics and diversity of Shigella species, the etiologic agents of bacillary dysentery.</title>
        <authorList>
            <person name="Yang F."/>
            <person name="Yang J."/>
            <person name="Zhang X."/>
            <person name="Chen L."/>
            <person name="Jiang Y."/>
            <person name="Yan Y."/>
            <person name="Tang X."/>
            <person name="Wang J."/>
            <person name="Xiong Z."/>
            <person name="Dong J."/>
            <person name="Xue Y."/>
            <person name="Zhu Y."/>
            <person name="Xu X."/>
            <person name="Sun L."/>
            <person name="Chen S."/>
            <person name="Nie H."/>
            <person name="Peng J."/>
            <person name="Xu J."/>
            <person name="Wang Y."/>
            <person name="Yuan Z."/>
            <person name="Wen Y."/>
            <person name="Yao Z."/>
            <person name="Shen Y."/>
            <person name="Qiang B."/>
            <person name="Hou Y."/>
            <person name="Yu J."/>
            <person name="Jin Q."/>
        </authorList>
    </citation>
    <scope>NUCLEOTIDE SEQUENCE [LARGE SCALE GENOMIC DNA]</scope>
    <source>
        <strain>Sb227</strain>
    </source>
</reference>
<dbReference type="EC" id="5.6.1.7" evidence="1"/>
<dbReference type="EMBL" id="CP000036">
    <property type="protein sequence ID" value="ABB68730.1"/>
    <property type="molecule type" value="Genomic_DNA"/>
</dbReference>
<dbReference type="RefSeq" id="WP_000729117.1">
    <property type="nucleotide sequence ID" value="NC_007613.1"/>
</dbReference>
<dbReference type="SMR" id="Q31T78"/>
<dbReference type="GeneID" id="93777681"/>
<dbReference type="KEGG" id="sbo:SBO_4313"/>
<dbReference type="HOGENOM" id="CLU_016503_3_0_6"/>
<dbReference type="Proteomes" id="UP000007067">
    <property type="component" value="Chromosome"/>
</dbReference>
<dbReference type="GO" id="GO:0005737">
    <property type="term" value="C:cytoplasm"/>
    <property type="evidence" value="ECO:0007669"/>
    <property type="project" value="UniProtKB-SubCell"/>
</dbReference>
<dbReference type="GO" id="GO:0005524">
    <property type="term" value="F:ATP binding"/>
    <property type="evidence" value="ECO:0007669"/>
    <property type="project" value="UniProtKB-UniRule"/>
</dbReference>
<dbReference type="GO" id="GO:0140662">
    <property type="term" value="F:ATP-dependent protein folding chaperone"/>
    <property type="evidence" value="ECO:0007669"/>
    <property type="project" value="InterPro"/>
</dbReference>
<dbReference type="GO" id="GO:0016853">
    <property type="term" value="F:isomerase activity"/>
    <property type="evidence" value="ECO:0007669"/>
    <property type="project" value="UniProtKB-KW"/>
</dbReference>
<dbReference type="GO" id="GO:0051082">
    <property type="term" value="F:unfolded protein binding"/>
    <property type="evidence" value="ECO:0007669"/>
    <property type="project" value="UniProtKB-UniRule"/>
</dbReference>
<dbReference type="GO" id="GO:0042026">
    <property type="term" value="P:protein refolding"/>
    <property type="evidence" value="ECO:0007669"/>
    <property type="project" value="UniProtKB-UniRule"/>
</dbReference>
<dbReference type="CDD" id="cd03344">
    <property type="entry name" value="GroEL"/>
    <property type="match status" value="1"/>
</dbReference>
<dbReference type="FunFam" id="1.10.560.10:FF:000001">
    <property type="entry name" value="60 kDa chaperonin"/>
    <property type="match status" value="1"/>
</dbReference>
<dbReference type="FunFam" id="3.50.7.10:FF:000001">
    <property type="entry name" value="60 kDa chaperonin"/>
    <property type="match status" value="1"/>
</dbReference>
<dbReference type="Gene3D" id="3.50.7.10">
    <property type="entry name" value="GroEL"/>
    <property type="match status" value="1"/>
</dbReference>
<dbReference type="Gene3D" id="1.10.560.10">
    <property type="entry name" value="GroEL-like equatorial domain"/>
    <property type="match status" value="1"/>
</dbReference>
<dbReference type="Gene3D" id="3.30.260.10">
    <property type="entry name" value="TCP-1-like chaperonin intermediate domain"/>
    <property type="match status" value="1"/>
</dbReference>
<dbReference type="HAMAP" id="MF_00600">
    <property type="entry name" value="CH60"/>
    <property type="match status" value="1"/>
</dbReference>
<dbReference type="InterPro" id="IPR018370">
    <property type="entry name" value="Chaperonin_Cpn60_CS"/>
</dbReference>
<dbReference type="InterPro" id="IPR001844">
    <property type="entry name" value="Cpn60/GroEL"/>
</dbReference>
<dbReference type="InterPro" id="IPR002423">
    <property type="entry name" value="Cpn60/GroEL/TCP-1"/>
</dbReference>
<dbReference type="InterPro" id="IPR027409">
    <property type="entry name" value="GroEL-like_apical_dom_sf"/>
</dbReference>
<dbReference type="InterPro" id="IPR027413">
    <property type="entry name" value="GROEL-like_equatorial_sf"/>
</dbReference>
<dbReference type="InterPro" id="IPR027410">
    <property type="entry name" value="TCP-1-like_intermed_sf"/>
</dbReference>
<dbReference type="NCBIfam" id="TIGR02348">
    <property type="entry name" value="GroEL"/>
    <property type="match status" value="1"/>
</dbReference>
<dbReference type="NCBIfam" id="NF000592">
    <property type="entry name" value="PRK00013.1"/>
    <property type="match status" value="1"/>
</dbReference>
<dbReference type="NCBIfam" id="NF009487">
    <property type="entry name" value="PRK12849.1"/>
    <property type="match status" value="1"/>
</dbReference>
<dbReference type="NCBIfam" id="NF009488">
    <property type="entry name" value="PRK12850.1"/>
    <property type="match status" value="1"/>
</dbReference>
<dbReference type="NCBIfam" id="NF009489">
    <property type="entry name" value="PRK12851.1"/>
    <property type="match status" value="1"/>
</dbReference>
<dbReference type="PANTHER" id="PTHR45633">
    <property type="entry name" value="60 KDA HEAT SHOCK PROTEIN, MITOCHONDRIAL"/>
    <property type="match status" value="1"/>
</dbReference>
<dbReference type="Pfam" id="PF00118">
    <property type="entry name" value="Cpn60_TCP1"/>
    <property type="match status" value="1"/>
</dbReference>
<dbReference type="PRINTS" id="PR00298">
    <property type="entry name" value="CHAPERONIN60"/>
</dbReference>
<dbReference type="SUPFAM" id="SSF52029">
    <property type="entry name" value="GroEL apical domain-like"/>
    <property type="match status" value="1"/>
</dbReference>
<dbReference type="SUPFAM" id="SSF48592">
    <property type="entry name" value="GroEL equatorial domain-like"/>
    <property type="match status" value="1"/>
</dbReference>
<dbReference type="SUPFAM" id="SSF54849">
    <property type="entry name" value="GroEL-intermediate domain like"/>
    <property type="match status" value="1"/>
</dbReference>
<dbReference type="PROSITE" id="PS00296">
    <property type="entry name" value="CHAPERONINS_CPN60"/>
    <property type="match status" value="1"/>
</dbReference>
<organism>
    <name type="scientific">Shigella boydii serotype 4 (strain Sb227)</name>
    <dbReference type="NCBI Taxonomy" id="300268"/>
    <lineage>
        <taxon>Bacteria</taxon>
        <taxon>Pseudomonadati</taxon>
        <taxon>Pseudomonadota</taxon>
        <taxon>Gammaproteobacteria</taxon>
        <taxon>Enterobacterales</taxon>
        <taxon>Enterobacteriaceae</taxon>
        <taxon>Shigella</taxon>
    </lineage>
</organism>